<organism>
    <name type="scientific">Dechloromonas aromatica (strain RCB)</name>
    <dbReference type="NCBI Taxonomy" id="159087"/>
    <lineage>
        <taxon>Bacteria</taxon>
        <taxon>Pseudomonadati</taxon>
        <taxon>Pseudomonadota</taxon>
        <taxon>Betaproteobacteria</taxon>
        <taxon>Rhodocyclales</taxon>
        <taxon>Azonexaceae</taxon>
        <taxon>Dechloromonas</taxon>
    </lineage>
</organism>
<gene>
    <name type="ordered locus">Daro_0172</name>
</gene>
<keyword id="KW-0963">Cytoplasm</keyword>
<keyword id="KW-0378">Hydrolase</keyword>
<keyword id="KW-0546">Nucleotide metabolism</keyword>
<accession>Q47JQ0</accession>
<evidence type="ECO:0000255" key="1">
    <source>
        <dbReference type="HAMAP-Rule" id="MF_00528"/>
    </source>
</evidence>
<reference key="1">
    <citation type="journal article" date="2009" name="BMC Genomics">
        <title>Metabolic analysis of the soil microbe Dechloromonas aromatica str. RCB: indications of a surprisingly complex life-style and cryptic anaerobic pathways for aromatic degradation.</title>
        <authorList>
            <person name="Salinero K.K."/>
            <person name="Keller K."/>
            <person name="Feil W.S."/>
            <person name="Feil H."/>
            <person name="Trong S."/>
            <person name="Di Bartolo G."/>
            <person name="Lapidus A."/>
        </authorList>
    </citation>
    <scope>NUCLEOTIDE SEQUENCE [LARGE SCALE GENOMIC DNA]</scope>
    <source>
        <strain>RCB</strain>
    </source>
</reference>
<comment type="function">
    <text evidence="1">Nucleoside triphosphate pyrophosphatase that hydrolyzes dTTP and UTP. May have a dual role in cell division arrest and in preventing the incorporation of modified nucleotides into cellular nucleic acids.</text>
</comment>
<comment type="catalytic activity">
    <reaction evidence="1">
        <text>dTTP + H2O = dTMP + diphosphate + H(+)</text>
        <dbReference type="Rhea" id="RHEA:28534"/>
        <dbReference type="ChEBI" id="CHEBI:15377"/>
        <dbReference type="ChEBI" id="CHEBI:15378"/>
        <dbReference type="ChEBI" id="CHEBI:33019"/>
        <dbReference type="ChEBI" id="CHEBI:37568"/>
        <dbReference type="ChEBI" id="CHEBI:63528"/>
        <dbReference type="EC" id="3.6.1.9"/>
    </reaction>
</comment>
<comment type="catalytic activity">
    <reaction evidence="1">
        <text>UTP + H2O = UMP + diphosphate + H(+)</text>
        <dbReference type="Rhea" id="RHEA:29395"/>
        <dbReference type="ChEBI" id="CHEBI:15377"/>
        <dbReference type="ChEBI" id="CHEBI:15378"/>
        <dbReference type="ChEBI" id="CHEBI:33019"/>
        <dbReference type="ChEBI" id="CHEBI:46398"/>
        <dbReference type="ChEBI" id="CHEBI:57865"/>
        <dbReference type="EC" id="3.6.1.9"/>
    </reaction>
</comment>
<comment type="cofactor">
    <cofactor evidence="1">
        <name>a divalent metal cation</name>
        <dbReference type="ChEBI" id="CHEBI:60240"/>
    </cofactor>
</comment>
<comment type="subcellular location">
    <subcellularLocation>
        <location evidence="1">Cytoplasm</location>
    </subcellularLocation>
</comment>
<comment type="similarity">
    <text evidence="1">Belongs to the Maf family. YhdE subfamily.</text>
</comment>
<dbReference type="EC" id="3.6.1.9" evidence="1"/>
<dbReference type="EMBL" id="CP000089">
    <property type="protein sequence ID" value="AAZ44931.1"/>
    <property type="molecule type" value="Genomic_DNA"/>
</dbReference>
<dbReference type="SMR" id="Q47JQ0"/>
<dbReference type="STRING" id="159087.Daro_0172"/>
<dbReference type="KEGG" id="dar:Daro_0172"/>
<dbReference type="eggNOG" id="COG0424">
    <property type="taxonomic scope" value="Bacteria"/>
</dbReference>
<dbReference type="HOGENOM" id="CLU_040416_2_1_4"/>
<dbReference type="OrthoDB" id="9807767at2"/>
<dbReference type="GO" id="GO:0005737">
    <property type="term" value="C:cytoplasm"/>
    <property type="evidence" value="ECO:0007669"/>
    <property type="project" value="UniProtKB-SubCell"/>
</dbReference>
<dbReference type="GO" id="GO:0036218">
    <property type="term" value="F:dTTP diphosphatase activity"/>
    <property type="evidence" value="ECO:0007669"/>
    <property type="project" value="RHEA"/>
</dbReference>
<dbReference type="GO" id="GO:0036221">
    <property type="term" value="F:UTP diphosphatase activity"/>
    <property type="evidence" value="ECO:0007669"/>
    <property type="project" value="RHEA"/>
</dbReference>
<dbReference type="GO" id="GO:0009117">
    <property type="term" value="P:nucleotide metabolic process"/>
    <property type="evidence" value="ECO:0007669"/>
    <property type="project" value="UniProtKB-KW"/>
</dbReference>
<dbReference type="CDD" id="cd00555">
    <property type="entry name" value="Maf"/>
    <property type="match status" value="1"/>
</dbReference>
<dbReference type="Gene3D" id="3.90.950.10">
    <property type="match status" value="1"/>
</dbReference>
<dbReference type="HAMAP" id="MF_00528">
    <property type="entry name" value="Maf"/>
    <property type="match status" value="1"/>
</dbReference>
<dbReference type="InterPro" id="IPR029001">
    <property type="entry name" value="ITPase-like_fam"/>
</dbReference>
<dbReference type="InterPro" id="IPR003697">
    <property type="entry name" value="Maf-like"/>
</dbReference>
<dbReference type="NCBIfam" id="TIGR00172">
    <property type="entry name" value="maf"/>
    <property type="match status" value="1"/>
</dbReference>
<dbReference type="PANTHER" id="PTHR43213">
    <property type="entry name" value="BIFUNCTIONAL DTTP/UTP PYROPHOSPHATASE/METHYLTRANSFERASE PROTEIN-RELATED"/>
    <property type="match status" value="1"/>
</dbReference>
<dbReference type="PANTHER" id="PTHR43213:SF5">
    <property type="entry name" value="BIFUNCTIONAL DTTP_UTP PYROPHOSPHATASE_METHYLTRANSFERASE PROTEIN-RELATED"/>
    <property type="match status" value="1"/>
</dbReference>
<dbReference type="Pfam" id="PF02545">
    <property type="entry name" value="Maf"/>
    <property type="match status" value="1"/>
</dbReference>
<dbReference type="PIRSF" id="PIRSF006305">
    <property type="entry name" value="Maf"/>
    <property type="match status" value="1"/>
</dbReference>
<dbReference type="SUPFAM" id="SSF52972">
    <property type="entry name" value="ITPase-like"/>
    <property type="match status" value="1"/>
</dbReference>
<protein>
    <recommendedName>
        <fullName evidence="1">dTTP/UTP pyrophosphatase</fullName>
        <shortName evidence="1">dTTPase/UTPase</shortName>
        <ecNumber evidence="1">3.6.1.9</ecNumber>
    </recommendedName>
    <alternativeName>
        <fullName evidence="1">Nucleoside triphosphate pyrophosphatase</fullName>
    </alternativeName>
    <alternativeName>
        <fullName evidence="1">Nucleotide pyrophosphatase</fullName>
        <shortName evidence="1">Nucleotide PPase</shortName>
    </alternativeName>
</protein>
<sequence length="201" mass="22315">MRLYLASRSPRRRELLNQIGIDFDTVVFRDGMRADSETDETPLPGEKPVAYVERVARAKAIHGLKIVEERKLPMRPVLSADTTLEFNGEIIGKPVDRADAAAILRRLSGQTHRVLTGVAINHMGHTEYVLSSSEVTFREIDDEEIRHYVMSGEPMDKAGAYGIQGRAGLFVKHLAGSFTGVMGLPVCETGELLKRLGFRPL</sequence>
<feature type="chain" id="PRO_0000267293" description="dTTP/UTP pyrophosphatase">
    <location>
        <begin position="1"/>
        <end position="201"/>
    </location>
</feature>
<feature type="active site" description="Proton acceptor" evidence="1">
    <location>
        <position position="81"/>
    </location>
</feature>
<feature type="site" description="Important for substrate specificity" evidence="1">
    <location>
        <position position="11"/>
    </location>
</feature>
<feature type="site" description="Important for substrate specificity" evidence="1">
    <location>
        <position position="82"/>
    </location>
</feature>
<feature type="site" description="Important for substrate specificity" evidence="1">
    <location>
        <position position="164"/>
    </location>
</feature>
<proteinExistence type="inferred from homology"/>
<name>NTPPA_DECAR</name>